<evidence type="ECO:0000305" key="1"/>
<reference key="1">
    <citation type="journal article" date="1998" name="Nature">
        <title>Deciphering the biology of Mycobacterium tuberculosis from the complete genome sequence.</title>
        <authorList>
            <person name="Cole S.T."/>
            <person name="Brosch R."/>
            <person name="Parkhill J."/>
            <person name="Garnier T."/>
            <person name="Churcher C.M."/>
            <person name="Harris D.E."/>
            <person name="Gordon S.V."/>
            <person name="Eiglmeier K."/>
            <person name="Gas S."/>
            <person name="Barry C.E. III"/>
            <person name="Tekaia F."/>
            <person name="Badcock K."/>
            <person name="Basham D."/>
            <person name="Brown D."/>
            <person name="Chillingworth T."/>
            <person name="Connor R."/>
            <person name="Davies R.M."/>
            <person name="Devlin K."/>
            <person name="Feltwell T."/>
            <person name="Gentles S."/>
            <person name="Hamlin N."/>
            <person name="Holroyd S."/>
            <person name="Hornsby T."/>
            <person name="Jagels K."/>
            <person name="Krogh A."/>
            <person name="McLean J."/>
            <person name="Moule S."/>
            <person name="Murphy L.D."/>
            <person name="Oliver S."/>
            <person name="Osborne J."/>
            <person name="Quail M.A."/>
            <person name="Rajandream M.A."/>
            <person name="Rogers J."/>
            <person name="Rutter S."/>
            <person name="Seeger K."/>
            <person name="Skelton S."/>
            <person name="Squares S."/>
            <person name="Squares R."/>
            <person name="Sulston J.E."/>
            <person name="Taylor K."/>
            <person name="Whitehead S."/>
            <person name="Barrell B.G."/>
        </authorList>
    </citation>
    <scope>NUCLEOTIDE SEQUENCE [LARGE SCALE GENOMIC DNA]</scope>
    <source>
        <strain>ATCC 25618 / H37Rv</strain>
    </source>
</reference>
<reference key="2">
    <citation type="journal article" date="2011" name="Mol. Cell. Proteomics">
        <title>Proteogenomic analysis of Mycobacterium tuberculosis by high resolution mass spectrometry.</title>
        <authorList>
            <person name="Kelkar D.S."/>
            <person name="Kumar D."/>
            <person name="Kumar P."/>
            <person name="Balakrishnan L."/>
            <person name="Muthusamy B."/>
            <person name="Yadav A.K."/>
            <person name="Shrivastava P."/>
            <person name="Marimuthu A."/>
            <person name="Anand S."/>
            <person name="Sundaram H."/>
            <person name="Kingsbury R."/>
            <person name="Harsha H.C."/>
            <person name="Nair B."/>
            <person name="Prasad T.S."/>
            <person name="Chauhan D.S."/>
            <person name="Katoch K."/>
            <person name="Katoch V.M."/>
            <person name="Kumar P."/>
            <person name="Chaerkady R."/>
            <person name="Ramachandran S."/>
            <person name="Dash D."/>
            <person name="Pandey A."/>
        </authorList>
    </citation>
    <scope>IDENTIFICATION BY MASS SPECTROMETRY [LARGE SCALE ANALYSIS]</scope>
    <source>
        <strain>ATCC 25618 / H37Rv</strain>
    </source>
</reference>
<sequence>MSGGSSRRYPPELRERAVRMVAEIRGQHDSEWAAISEVARLLGVGCAETVRKWVRQAQVDAGARPGTTTEESAELKRLRRDNAELRRANAILKTASAFFAAELDRPAR</sequence>
<accession>P9WKH5</accession>
<accession>L0TBC3</accession>
<accession>O08121</accession>
<accession>O08155</accession>
<accession>O08157</accession>
<accession>O08158</accession>
<accession>O08265</accession>
<accession>P0C5G9</accession>
<accession>Q50686</accession>
<protein>
    <recommendedName>
        <fullName>Insertion element IS6110 uncharacterized 12.0 kDa protein</fullName>
    </recommendedName>
</protein>
<organism>
    <name type="scientific">Mycobacterium tuberculosis (strain ATCC 25618 / H37Rv)</name>
    <dbReference type="NCBI Taxonomy" id="83332"/>
    <lineage>
        <taxon>Bacteria</taxon>
        <taxon>Bacillati</taxon>
        <taxon>Actinomycetota</taxon>
        <taxon>Actinomycetes</taxon>
        <taxon>Mycobacteriales</taxon>
        <taxon>Mycobacteriaceae</taxon>
        <taxon>Mycobacterium</taxon>
        <taxon>Mycobacterium tuberculosis complex</taxon>
    </lineage>
</organism>
<gene>
    <name type="ordered locus">Rv0795</name>
    <name type="ORF">MTV042.05</name>
</gene>
<gene>
    <name type="ordered locus">Rv1370c</name>
    <name type="ORF">MTCY02B12.04c</name>
</gene>
<gene>
    <name type="ordered locus">Rv1757c</name>
    <name type="ORF">MTCY28.23c</name>
</gene>
<gene>
    <name type="ordered locus">Rv1763</name>
    <name type="ORF">MTCY28.29</name>
</gene>
<gene>
    <name type="ordered locus">Rv2105</name>
    <name type="ORF">MTCY261.01</name>
</gene>
<gene>
    <name type="ordered locus">Rv2168c</name>
    <name type="ORF">MTV021.01c</name>
</gene>
<gene>
    <name type="ordered locus">Rv2278</name>
    <name type="ORF">MTCY339.32c</name>
</gene>
<gene>
    <name type="ordered locus">Rv2354</name>
    <name type="ORF">MTCY98.23</name>
</gene>
<gene>
    <name type="ordered locus">Rv2480c</name>
    <name type="ORF">MTV008.36c</name>
</gene>
<gene>
    <name type="ordered locus">Rv2648</name>
    <name type="ORF">MTCY441.17A</name>
</gene>
<gene>
    <name type="ordered locus">Rv2815c</name>
    <name type="ORF">MTCY16B7.28</name>
</gene>
<gene>
    <name type="ordered locus">Rv3184</name>
    <name type="ORF">MYV014.28</name>
</gene>
<gene>
    <name type="ordered locus">Rv3186</name>
    <name type="ORF">MTV014.30</name>
</gene>
<gene>
    <name type="ordered locus">Rv3325</name>
    <name type="ORF">MTV016.25</name>
</gene>
<gene>
    <name type="ordered locus">Rv3381c</name>
    <name type="ORF">MTV004.39c</name>
</gene>
<gene>
    <name type="ordered locus">Rv3474</name>
    <name type="ORF">MTCY13E12.27</name>
</gene>
<feature type="chain" id="PRO_0000075512" description="Insertion element IS6110 uncharacterized 12.0 kDa protein">
    <location>
        <begin position="1"/>
        <end position="108"/>
    </location>
</feature>
<keyword id="KW-1185">Reference proteome</keyword>
<keyword id="KW-0814">Transposable element</keyword>
<comment type="similarity">
    <text evidence="1">Belongs to the transposase 8 family.</text>
</comment>
<dbReference type="EMBL" id="AL123456">
    <property type="protein sequence ID" value="CCP43543.1"/>
    <property type="molecule type" value="Genomic_DNA"/>
</dbReference>
<dbReference type="EMBL" id="AL123456">
    <property type="protein sequence ID" value="CCP44129.1"/>
    <property type="molecule type" value="Genomic_DNA"/>
</dbReference>
<dbReference type="EMBL" id="AL123456">
    <property type="protein sequence ID" value="CCP44523.1"/>
    <property type="molecule type" value="Genomic_DNA"/>
</dbReference>
<dbReference type="EMBL" id="AL123456">
    <property type="protein sequence ID" value="CCP44529.1"/>
    <property type="molecule type" value="Genomic_DNA"/>
</dbReference>
<dbReference type="EMBL" id="AL123456">
    <property type="protein sequence ID" value="CCP44880.1"/>
    <property type="molecule type" value="Genomic_DNA"/>
</dbReference>
<dbReference type="EMBL" id="AL123456">
    <property type="protein sequence ID" value="CCP44945.1"/>
    <property type="molecule type" value="Genomic_DNA"/>
</dbReference>
<dbReference type="EMBL" id="AL123456">
    <property type="protein sequence ID" value="CCP45060.1"/>
    <property type="molecule type" value="Genomic_DNA"/>
</dbReference>
<dbReference type="EMBL" id="AL123456">
    <property type="protein sequence ID" value="CCP45142.1"/>
    <property type="molecule type" value="Genomic_DNA"/>
</dbReference>
<dbReference type="EMBL" id="AL123456">
    <property type="protein sequence ID" value="CCP45274.1"/>
    <property type="molecule type" value="Genomic_DNA"/>
</dbReference>
<dbReference type="EMBL" id="AL123456">
    <property type="protein sequence ID" value="CCP45446.1"/>
    <property type="molecule type" value="Genomic_DNA"/>
</dbReference>
<dbReference type="EMBL" id="AL123456">
    <property type="protein sequence ID" value="CCP45615.1"/>
    <property type="molecule type" value="Genomic_DNA"/>
</dbReference>
<dbReference type="EMBL" id="AL123456">
    <property type="protein sequence ID" value="CCP45995.1"/>
    <property type="molecule type" value="Genomic_DNA"/>
</dbReference>
<dbReference type="EMBL" id="AL123456">
    <property type="protein sequence ID" value="CCP45997.1"/>
    <property type="molecule type" value="Genomic_DNA"/>
</dbReference>
<dbReference type="EMBL" id="AL123456">
    <property type="protein sequence ID" value="CCP46146.1"/>
    <property type="molecule type" value="Genomic_DNA"/>
</dbReference>
<dbReference type="EMBL" id="AL123456">
    <property type="protein sequence ID" value="CCP46202.1"/>
    <property type="molecule type" value="Genomic_DNA"/>
</dbReference>
<dbReference type="EMBL" id="AL123456">
    <property type="protein sequence ID" value="CCP46296.1"/>
    <property type="molecule type" value="Genomic_DNA"/>
</dbReference>
<dbReference type="PIR" id="G70567">
    <property type="entry name" value="G70567"/>
</dbReference>
<dbReference type="SMR" id="P9WKH5"/>
<dbReference type="STRING" id="83332.Rv0795"/>
<dbReference type="PaxDb" id="83332-Rv0795"/>
<dbReference type="KEGG" id="mtv:RVBD_0795"/>
<dbReference type="KEGG" id="mtv:RVBD_1370c"/>
<dbReference type="KEGG" id="mtv:RVBD_1757c"/>
<dbReference type="KEGG" id="mtv:RVBD_1763"/>
<dbReference type="KEGG" id="mtv:RVBD_2105"/>
<dbReference type="KEGG" id="mtv:RVBD_2168c"/>
<dbReference type="KEGG" id="mtv:RVBD_2278"/>
<dbReference type="KEGG" id="mtv:RVBD_2354"/>
<dbReference type="KEGG" id="mtv:RVBD_2480c"/>
<dbReference type="KEGG" id="mtv:RVBD_2648"/>
<dbReference type="KEGG" id="mtv:RVBD_2815c"/>
<dbReference type="KEGG" id="mtv:RVBD_3184"/>
<dbReference type="KEGG" id="mtv:RVBD_3186"/>
<dbReference type="KEGG" id="mtv:RVBD_3325"/>
<dbReference type="KEGG" id="mtv:RVBD_3381c"/>
<dbReference type="KEGG" id="mtv:RVBD_3474"/>
<dbReference type="TubercuList" id="Rv0795"/>
<dbReference type="TubercuList" id="Rv1370c"/>
<dbReference type="TubercuList" id="Rv1757c"/>
<dbReference type="TubercuList" id="Rv1763"/>
<dbReference type="TubercuList" id="Rv2105"/>
<dbReference type="TubercuList" id="Rv2168c"/>
<dbReference type="TubercuList" id="Rv2278"/>
<dbReference type="TubercuList" id="Rv2354"/>
<dbReference type="TubercuList" id="Rv2480c"/>
<dbReference type="TubercuList" id="Rv2648"/>
<dbReference type="TubercuList" id="Rv2815c"/>
<dbReference type="TubercuList" id="Rv3184"/>
<dbReference type="TubercuList" id="Rv3186"/>
<dbReference type="TubercuList" id="Rv3325"/>
<dbReference type="TubercuList" id="Rv3381c"/>
<dbReference type="TubercuList" id="Rv3474"/>
<dbReference type="eggNOG" id="COG2963">
    <property type="taxonomic scope" value="Bacteria"/>
</dbReference>
<dbReference type="InParanoid" id="P9WKH5"/>
<dbReference type="PhylomeDB" id="P9WKH5"/>
<dbReference type="Proteomes" id="UP000001584">
    <property type="component" value="Chromosome"/>
</dbReference>
<dbReference type="GO" id="GO:0005886">
    <property type="term" value="C:plasma membrane"/>
    <property type="evidence" value="ECO:0007005"/>
    <property type="project" value="MTBBASE"/>
</dbReference>
<dbReference type="GO" id="GO:0003677">
    <property type="term" value="F:DNA binding"/>
    <property type="evidence" value="ECO:0007669"/>
    <property type="project" value="InterPro"/>
</dbReference>
<dbReference type="GO" id="GO:0004803">
    <property type="term" value="F:transposase activity"/>
    <property type="evidence" value="ECO:0007669"/>
    <property type="project" value="InterPro"/>
</dbReference>
<dbReference type="GO" id="GO:0006313">
    <property type="term" value="P:DNA transposition"/>
    <property type="evidence" value="ECO:0007669"/>
    <property type="project" value="InterPro"/>
</dbReference>
<dbReference type="Gene3D" id="1.10.10.10">
    <property type="entry name" value="Winged helix-like DNA-binding domain superfamily/Winged helix DNA-binding domain"/>
    <property type="match status" value="1"/>
</dbReference>
<dbReference type="InterPro" id="IPR009057">
    <property type="entry name" value="Homeodomain-like_sf"/>
</dbReference>
<dbReference type="InterPro" id="IPR002514">
    <property type="entry name" value="Transposase_8"/>
</dbReference>
<dbReference type="InterPro" id="IPR036388">
    <property type="entry name" value="WH-like_DNA-bd_sf"/>
</dbReference>
<dbReference type="Pfam" id="PF01527">
    <property type="entry name" value="HTH_Tnp_1"/>
    <property type="match status" value="1"/>
</dbReference>
<dbReference type="SUPFAM" id="SSF46689">
    <property type="entry name" value="Homeodomain-like"/>
    <property type="match status" value="1"/>
</dbReference>
<proteinExistence type="evidence at protein level"/>
<name>YIA4_MYCTU</name>